<organism>
    <name type="scientific">Pectobacterium atrosepticum (strain SCRI 1043 / ATCC BAA-672)</name>
    <name type="common">Erwinia carotovora subsp. atroseptica</name>
    <dbReference type="NCBI Taxonomy" id="218491"/>
    <lineage>
        <taxon>Bacteria</taxon>
        <taxon>Pseudomonadati</taxon>
        <taxon>Pseudomonadota</taxon>
        <taxon>Gammaproteobacteria</taxon>
        <taxon>Enterobacterales</taxon>
        <taxon>Pectobacteriaceae</taxon>
        <taxon>Pectobacterium</taxon>
    </lineage>
</organism>
<gene>
    <name evidence="1" type="primary">lolD</name>
    <name type="ordered locus">ECA1824</name>
</gene>
<dbReference type="EC" id="7.6.2.-" evidence="1"/>
<dbReference type="EMBL" id="BX950851">
    <property type="protein sequence ID" value="CAG74727.1"/>
    <property type="molecule type" value="Genomic_DNA"/>
</dbReference>
<dbReference type="RefSeq" id="WP_005970460.1">
    <property type="nucleotide sequence ID" value="NC_004547.2"/>
</dbReference>
<dbReference type="SMR" id="Q6D664"/>
<dbReference type="STRING" id="218491.ECA1824"/>
<dbReference type="GeneID" id="57209467"/>
<dbReference type="KEGG" id="eca:ECA1824"/>
<dbReference type="eggNOG" id="COG1136">
    <property type="taxonomic scope" value="Bacteria"/>
</dbReference>
<dbReference type="HOGENOM" id="CLU_000604_1_22_6"/>
<dbReference type="OrthoDB" id="9801477at2"/>
<dbReference type="Proteomes" id="UP000007966">
    <property type="component" value="Chromosome"/>
</dbReference>
<dbReference type="GO" id="GO:0005886">
    <property type="term" value="C:plasma membrane"/>
    <property type="evidence" value="ECO:0007669"/>
    <property type="project" value="UniProtKB-SubCell"/>
</dbReference>
<dbReference type="GO" id="GO:0005524">
    <property type="term" value="F:ATP binding"/>
    <property type="evidence" value="ECO:0007669"/>
    <property type="project" value="UniProtKB-KW"/>
</dbReference>
<dbReference type="GO" id="GO:0016887">
    <property type="term" value="F:ATP hydrolysis activity"/>
    <property type="evidence" value="ECO:0007669"/>
    <property type="project" value="InterPro"/>
</dbReference>
<dbReference type="GO" id="GO:0022857">
    <property type="term" value="F:transmembrane transporter activity"/>
    <property type="evidence" value="ECO:0007669"/>
    <property type="project" value="TreeGrafter"/>
</dbReference>
<dbReference type="GO" id="GO:0044874">
    <property type="term" value="P:lipoprotein localization to outer membrane"/>
    <property type="evidence" value="ECO:0007669"/>
    <property type="project" value="TreeGrafter"/>
</dbReference>
<dbReference type="GO" id="GO:0089705">
    <property type="term" value="P:protein localization to outer membrane"/>
    <property type="evidence" value="ECO:0007669"/>
    <property type="project" value="TreeGrafter"/>
</dbReference>
<dbReference type="CDD" id="cd03255">
    <property type="entry name" value="ABC_MJ0796_LolCDE_FtsE"/>
    <property type="match status" value="1"/>
</dbReference>
<dbReference type="FunFam" id="3.40.50.300:FF:000230">
    <property type="entry name" value="Lipoprotein-releasing system ATP-binding protein LolD"/>
    <property type="match status" value="1"/>
</dbReference>
<dbReference type="Gene3D" id="3.40.50.300">
    <property type="entry name" value="P-loop containing nucleotide triphosphate hydrolases"/>
    <property type="match status" value="1"/>
</dbReference>
<dbReference type="InterPro" id="IPR003593">
    <property type="entry name" value="AAA+_ATPase"/>
</dbReference>
<dbReference type="InterPro" id="IPR003439">
    <property type="entry name" value="ABC_transporter-like_ATP-bd"/>
</dbReference>
<dbReference type="InterPro" id="IPR017871">
    <property type="entry name" value="ABC_transporter-like_CS"/>
</dbReference>
<dbReference type="InterPro" id="IPR015854">
    <property type="entry name" value="ABC_transpr_LolD-like"/>
</dbReference>
<dbReference type="InterPro" id="IPR011924">
    <property type="entry name" value="LolD_lipo_ATP-bd"/>
</dbReference>
<dbReference type="InterPro" id="IPR017911">
    <property type="entry name" value="MacB-like_ATP-bd"/>
</dbReference>
<dbReference type="InterPro" id="IPR027417">
    <property type="entry name" value="P-loop_NTPase"/>
</dbReference>
<dbReference type="NCBIfam" id="TIGR02211">
    <property type="entry name" value="LolD_lipo_ex"/>
    <property type="match status" value="1"/>
</dbReference>
<dbReference type="NCBIfam" id="NF008639">
    <property type="entry name" value="PRK11629.1"/>
    <property type="match status" value="1"/>
</dbReference>
<dbReference type="PANTHER" id="PTHR24220">
    <property type="entry name" value="IMPORT ATP-BINDING PROTEIN"/>
    <property type="match status" value="1"/>
</dbReference>
<dbReference type="PANTHER" id="PTHR24220:SF689">
    <property type="entry name" value="LIPOPROTEIN-RELEASING SYSTEM ATP-BINDING PROTEIN LOLD"/>
    <property type="match status" value="1"/>
</dbReference>
<dbReference type="Pfam" id="PF00005">
    <property type="entry name" value="ABC_tran"/>
    <property type="match status" value="1"/>
</dbReference>
<dbReference type="SMART" id="SM00382">
    <property type="entry name" value="AAA"/>
    <property type="match status" value="1"/>
</dbReference>
<dbReference type="SUPFAM" id="SSF52540">
    <property type="entry name" value="P-loop containing nucleoside triphosphate hydrolases"/>
    <property type="match status" value="1"/>
</dbReference>
<dbReference type="PROSITE" id="PS00211">
    <property type="entry name" value="ABC_TRANSPORTER_1"/>
    <property type="match status" value="1"/>
</dbReference>
<dbReference type="PROSITE" id="PS50893">
    <property type="entry name" value="ABC_TRANSPORTER_2"/>
    <property type="match status" value="1"/>
</dbReference>
<dbReference type="PROSITE" id="PS51244">
    <property type="entry name" value="LOLD"/>
    <property type="match status" value="1"/>
</dbReference>
<feature type="chain" id="PRO_0000272082" description="Lipoprotein-releasing system ATP-binding protein LolD">
    <location>
        <begin position="1"/>
        <end position="235"/>
    </location>
</feature>
<feature type="domain" description="ABC transporter" evidence="1">
    <location>
        <begin position="7"/>
        <end position="234"/>
    </location>
</feature>
<feature type="binding site" evidence="1">
    <location>
        <begin position="43"/>
        <end position="50"/>
    </location>
    <ligand>
        <name>ATP</name>
        <dbReference type="ChEBI" id="CHEBI:30616"/>
    </ligand>
</feature>
<proteinExistence type="inferred from homology"/>
<sequence>MSDLSLLQCTNLSKRYQDGKLSTDVLRDVSFEMSSGEMMAIVGSSGSGKSTLLHVLGGLDTPTSGEVIFKGQPLSTLSAAAKADLRNRELGFIYQFHHLLPDFTALENVAMPLLIGKVPTSQAQDKAREMLAAVGLEARSHHRSSELSGGERQRVAIARALVNSPSLVLADEPTGNLDQRTADTIFELLGELNVRQGTAFLVVTHDLQLAGRLNRQLEMRDGQLQQELTLMGARQ</sequence>
<comment type="function">
    <text evidence="1">Part of the ABC transporter complex LolCDE involved in the translocation of mature outer membrane-directed lipoproteins, from the inner membrane to the periplasmic chaperone, LolA. Responsible for the formation of the LolA-lipoprotein complex in an ATP-dependent manner.</text>
</comment>
<comment type="subunit">
    <text evidence="1">The complex is composed of two ATP-binding proteins (LolD) and two transmembrane proteins (LolC and LolE).</text>
</comment>
<comment type="subcellular location">
    <subcellularLocation>
        <location evidence="1">Cell inner membrane</location>
        <topology evidence="1">Peripheral membrane protein</topology>
    </subcellularLocation>
</comment>
<comment type="similarity">
    <text evidence="1">Belongs to the ABC transporter superfamily. Lipoprotein translocase (TC 3.A.1.125) family.</text>
</comment>
<name>LOLD_PECAS</name>
<protein>
    <recommendedName>
        <fullName evidence="1">Lipoprotein-releasing system ATP-binding protein LolD</fullName>
        <ecNumber evidence="1">7.6.2.-</ecNumber>
    </recommendedName>
</protein>
<reference key="1">
    <citation type="journal article" date="2004" name="Proc. Natl. Acad. Sci. U.S.A.">
        <title>Genome sequence of the enterobacterial phytopathogen Erwinia carotovora subsp. atroseptica and characterization of virulence factors.</title>
        <authorList>
            <person name="Bell K.S."/>
            <person name="Sebaihia M."/>
            <person name="Pritchard L."/>
            <person name="Holden M.T.G."/>
            <person name="Hyman L.J."/>
            <person name="Holeva M.C."/>
            <person name="Thomson N.R."/>
            <person name="Bentley S.D."/>
            <person name="Churcher L.J.C."/>
            <person name="Mungall K."/>
            <person name="Atkin R."/>
            <person name="Bason N."/>
            <person name="Brooks K."/>
            <person name="Chillingworth T."/>
            <person name="Clark K."/>
            <person name="Doggett J."/>
            <person name="Fraser A."/>
            <person name="Hance Z."/>
            <person name="Hauser H."/>
            <person name="Jagels K."/>
            <person name="Moule S."/>
            <person name="Norbertczak H."/>
            <person name="Ormond D."/>
            <person name="Price C."/>
            <person name="Quail M.A."/>
            <person name="Sanders M."/>
            <person name="Walker D."/>
            <person name="Whitehead S."/>
            <person name="Salmond G.P.C."/>
            <person name="Birch P.R.J."/>
            <person name="Parkhill J."/>
            <person name="Toth I.K."/>
        </authorList>
    </citation>
    <scope>NUCLEOTIDE SEQUENCE [LARGE SCALE GENOMIC DNA]</scope>
    <source>
        <strain>SCRI 1043 / ATCC BAA-672</strain>
    </source>
</reference>
<accession>Q6D664</accession>
<evidence type="ECO:0000255" key="1">
    <source>
        <dbReference type="HAMAP-Rule" id="MF_01708"/>
    </source>
</evidence>
<keyword id="KW-0067">ATP-binding</keyword>
<keyword id="KW-0997">Cell inner membrane</keyword>
<keyword id="KW-1003">Cell membrane</keyword>
<keyword id="KW-0472">Membrane</keyword>
<keyword id="KW-0547">Nucleotide-binding</keyword>
<keyword id="KW-1185">Reference proteome</keyword>
<keyword id="KW-1278">Translocase</keyword>
<keyword id="KW-0813">Transport</keyword>